<gene>
    <name evidence="1" type="primary">panD</name>
    <name type="ordered locus">LBJ_1234</name>
</gene>
<comment type="function">
    <text evidence="1">Catalyzes the pyruvoyl-dependent decarboxylation of aspartate to produce beta-alanine.</text>
</comment>
<comment type="catalytic activity">
    <reaction evidence="1">
        <text>L-aspartate + H(+) = beta-alanine + CO2</text>
        <dbReference type="Rhea" id="RHEA:19497"/>
        <dbReference type="ChEBI" id="CHEBI:15378"/>
        <dbReference type="ChEBI" id="CHEBI:16526"/>
        <dbReference type="ChEBI" id="CHEBI:29991"/>
        <dbReference type="ChEBI" id="CHEBI:57966"/>
        <dbReference type="EC" id="4.1.1.11"/>
    </reaction>
</comment>
<comment type="cofactor">
    <cofactor evidence="1">
        <name>pyruvate</name>
        <dbReference type="ChEBI" id="CHEBI:15361"/>
    </cofactor>
    <text evidence="1">Binds 1 pyruvoyl group covalently per subunit.</text>
</comment>
<comment type="pathway">
    <text evidence="1">Cofactor biosynthesis; (R)-pantothenate biosynthesis; beta-alanine from L-aspartate: step 1/1.</text>
</comment>
<comment type="subunit">
    <text evidence="1">Heterooctamer of four alpha and four beta subunits.</text>
</comment>
<comment type="subcellular location">
    <subcellularLocation>
        <location evidence="1">Cytoplasm</location>
    </subcellularLocation>
</comment>
<comment type="PTM">
    <text evidence="1">Is synthesized initially as an inactive proenzyme, which is activated by self-cleavage at a specific serine bond to produce a beta-subunit with a hydroxyl group at its C-terminus and an alpha-subunit with a pyruvoyl group at its N-terminus.</text>
</comment>
<comment type="similarity">
    <text evidence="1">Belongs to the PanD family.</text>
</comment>
<accession>Q04TD7</accession>
<reference key="1">
    <citation type="journal article" date="2006" name="Proc. Natl. Acad. Sci. U.S.A.">
        <title>Genome reduction in Leptospira borgpetersenii reflects limited transmission potential.</title>
        <authorList>
            <person name="Bulach D.M."/>
            <person name="Zuerner R.L."/>
            <person name="Wilson P."/>
            <person name="Seemann T."/>
            <person name="McGrath A."/>
            <person name="Cullen P.A."/>
            <person name="Davis J."/>
            <person name="Johnson M."/>
            <person name="Kuczek E."/>
            <person name="Alt D.P."/>
            <person name="Peterson-Burch B."/>
            <person name="Coppel R.L."/>
            <person name="Rood J.I."/>
            <person name="Davies J.K."/>
            <person name="Adler B."/>
        </authorList>
    </citation>
    <scope>NUCLEOTIDE SEQUENCE [LARGE SCALE GENOMIC DNA]</scope>
    <source>
        <strain>JB197</strain>
    </source>
</reference>
<keyword id="KW-0068">Autocatalytic cleavage</keyword>
<keyword id="KW-0963">Cytoplasm</keyword>
<keyword id="KW-0210">Decarboxylase</keyword>
<keyword id="KW-0456">Lyase</keyword>
<keyword id="KW-0566">Pantothenate biosynthesis</keyword>
<keyword id="KW-0670">Pyruvate</keyword>
<keyword id="KW-0704">Schiff base</keyword>
<keyword id="KW-0865">Zymogen</keyword>
<name>PAND_LEPBJ</name>
<organism>
    <name type="scientific">Leptospira borgpetersenii serovar Hardjo-bovis (strain JB197)</name>
    <dbReference type="NCBI Taxonomy" id="355277"/>
    <lineage>
        <taxon>Bacteria</taxon>
        <taxon>Pseudomonadati</taxon>
        <taxon>Spirochaetota</taxon>
        <taxon>Spirochaetia</taxon>
        <taxon>Leptospirales</taxon>
        <taxon>Leptospiraceae</taxon>
        <taxon>Leptospira</taxon>
    </lineage>
</organism>
<proteinExistence type="inferred from homology"/>
<evidence type="ECO:0000255" key="1">
    <source>
        <dbReference type="HAMAP-Rule" id="MF_00446"/>
    </source>
</evidence>
<protein>
    <recommendedName>
        <fullName evidence="1">Aspartate 1-decarboxylase</fullName>
        <ecNumber evidence="1">4.1.1.11</ecNumber>
    </recommendedName>
    <alternativeName>
        <fullName evidence="1">Aspartate alpha-decarboxylase</fullName>
    </alternativeName>
    <component>
        <recommendedName>
            <fullName evidence="1">Aspartate 1-decarboxylase beta chain</fullName>
        </recommendedName>
    </component>
    <component>
        <recommendedName>
            <fullName evidence="1">Aspartate 1-decarboxylase alpha chain</fullName>
        </recommendedName>
    </component>
</protein>
<feature type="chain" id="PRO_0000307003" description="Aspartate 1-decarboxylase beta chain" evidence="1">
    <location>
        <begin position="1"/>
        <end position="24"/>
    </location>
</feature>
<feature type="chain" id="PRO_0000307004" description="Aspartate 1-decarboxylase alpha chain" evidence="1">
    <location>
        <begin position="25"/>
        <end position="116"/>
    </location>
</feature>
<feature type="active site" description="Schiff-base intermediate with substrate; via pyruvic acid" evidence="1">
    <location>
        <position position="25"/>
    </location>
</feature>
<feature type="active site" description="Proton donor" evidence="1">
    <location>
        <position position="58"/>
    </location>
</feature>
<feature type="binding site" evidence="1">
    <location>
        <position position="57"/>
    </location>
    <ligand>
        <name>substrate</name>
    </ligand>
</feature>
<feature type="binding site" evidence="1">
    <location>
        <begin position="73"/>
        <end position="75"/>
    </location>
    <ligand>
        <name>substrate</name>
    </ligand>
</feature>
<feature type="modified residue" description="Pyruvic acid (Ser)" evidence="1">
    <location>
        <position position="25"/>
    </location>
</feature>
<sequence length="116" mass="12870">MQITVMKGKIHRATVTDADLNYEGSLTVDMDLVDAAGMRVYEKVSVVNINNGARFETYIIEGKRGSGEICLNGAAARLGMKGDKIIVITYAQVEENELPIDYIPKVVHVDENNRKR</sequence>
<dbReference type="EC" id="4.1.1.11" evidence="1"/>
<dbReference type="EMBL" id="CP000350">
    <property type="protein sequence ID" value="ABJ75833.1"/>
    <property type="molecule type" value="Genomic_DNA"/>
</dbReference>
<dbReference type="SMR" id="Q04TD7"/>
<dbReference type="KEGG" id="lbj:LBJ_1234"/>
<dbReference type="HOGENOM" id="CLU_115305_2_0_12"/>
<dbReference type="UniPathway" id="UPA00028">
    <property type="reaction ID" value="UER00002"/>
</dbReference>
<dbReference type="Proteomes" id="UP000000656">
    <property type="component" value="Chromosome 1"/>
</dbReference>
<dbReference type="GO" id="GO:0005829">
    <property type="term" value="C:cytosol"/>
    <property type="evidence" value="ECO:0007669"/>
    <property type="project" value="TreeGrafter"/>
</dbReference>
<dbReference type="GO" id="GO:0004068">
    <property type="term" value="F:aspartate 1-decarboxylase activity"/>
    <property type="evidence" value="ECO:0007669"/>
    <property type="project" value="UniProtKB-UniRule"/>
</dbReference>
<dbReference type="GO" id="GO:0006523">
    <property type="term" value="P:alanine biosynthetic process"/>
    <property type="evidence" value="ECO:0007669"/>
    <property type="project" value="InterPro"/>
</dbReference>
<dbReference type="GO" id="GO:0015940">
    <property type="term" value="P:pantothenate biosynthetic process"/>
    <property type="evidence" value="ECO:0007669"/>
    <property type="project" value="UniProtKB-UniRule"/>
</dbReference>
<dbReference type="CDD" id="cd06919">
    <property type="entry name" value="Asp_decarbox"/>
    <property type="match status" value="1"/>
</dbReference>
<dbReference type="Gene3D" id="2.40.40.20">
    <property type="match status" value="1"/>
</dbReference>
<dbReference type="HAMAP" id="MF_00446">
    <property type="entry name" value="PanD"/>
    <property type="match status" value="1"/>
</dbReference>
<dbReference type="InterPro" id="IPR009010">
    <property type="entry name" value="Asp_de-COase-like_dom_sf"/>
</dbReference>
<dbReference type="InterPro" id="IPR003190">
    <property type="entry name" value="Asp_decarbox"/>
</dbReference>
<dbReference type="NCBIfam" id="TIGR00223">
    <property type="entry name" value="panD"/>
    <property type="match status" value="1"/>
</dbReference>
<dbReference type="PANTHER" id="PTHR21012">
    <property type="entry name" value="ASPARTATE 1-DECARBOXYLASE"/>
    <property type="match status" value="1"/>
</dbReference>
<dbReference type="PANTHER" id="PTHR21012:SF0">
    <property type="entry name" value="ASPARTATE 1-DECARBOXYLASE"/>
    <property type="match status" value="1"/>
</dbReference>
<dbReference type="Pfam" id="PF02261">
    <property type="entry name" value="Asp_decarbox"/>
    <property type="match status" value="1"/>
</dbReference>
<dbReference type="PIRSF" id="PIRSF006246">
    <property type="entry name" value="Asp_decarbox"/>
    <property type="match status" value="1"/>
</dbReference>
<dbReference type="SUPFAM" id="SSF50692">
    <property type="entry name" value="ADC-like"/>
    <property type="match status" value="1"/>
</dbReference>